<protein>
    <recommendedName>
        <fullName>Probable LL-diaminopimelate aminotransferase, chloroplastic</fullName>
        <shortName>DAP-AT</shortName>
        <shortName>DAP-aminotransferase</shortName>
        <shortName>LL-DAP-aminotransferase</shortName>
        <ecNumber>2.6.1.83</ecNumber>
    </recommendedName>
</protein>
<proteinExistence type="evidence at transcript level"/>
<accession>Q10MQ2</accession>
<accession>A0A0P0VWF4</accession>
<accession>Q10MQ1</accession>
<accession>Q6VMN8</accession>
<gene>
    <name type="primary">AGD2</name>
    <name type="ordered locus">Os03g0299900</name>
    <name type="ordered locus">LOC_Os03g18810</name>
    <name type="ORF">OsJ_27598</name>
</gene>
<reference key="1">
    <citation type="journal article" date="2004" name="Plant Cell">
        <title>Divergent roles in Arabidopsis thaliana development and defense of two homologous genes, aberrant growth and death2 and AGD2-LIKE DEFENSE RESPONSE PROTEIN1, encoding novel aminotransferases.</title>
        <authorList>
            <person name="Song J.T."/>
            <person name="Lu H."/>
            <person name="Greenberg J.T."/>
        </authorList>
    </citation>
    <scope>NUCLEOTIDE SEQUENCE [MRNA]</scope>
</reference>
<reference key="2">
    <citation type="journal article" date="2005" name="Genome Res.">
        <title>Sequence, annotation, and analysis of synteny between rice chromosome 3 and diverged grass species.</title>
        <authorList>
            <consortium name="The rice chromosome 3 sequencing consortium"/>
            <person name="Buell C.R."/>
            <person name="Yuan Q."/>
            <person name="Ouyang S."/>
            <person name="Liu J."/>
            <person name="Zhu W."/>
            <person name="Wang A."/>
            <person name="Maiti R."/>
            <person name="Haas B."/>
            <person name="Wortman J."/>
            <person name="Pertea M."/>
            <person name="Jones K.M."/>
            <person name="Kim M."/>
            <person name="Overton L."/>
            <person name="Tsitrin T."/>
            <person name="Fadrosh D."/>
            <person name="Bera J."/>
            <person name="Weaver B."/>
            <person name="Jin S."/>
            <person name="Johri S."/>
            <person name="Reardon M."/>
            <person name="Webb K."/>
            <person name="Hill J."/>
            <person name="Moffat K."/>
            <person name="Tallon L."/>
            <person name="Van Aken S."/>
            <person name="Lewis M."/>
            <person name="Utterback T."/>
            <person name="Feldblyum T."/>
            <person name="Zismann V."/>
            <person name="Iobst S."/>
            <person name="Hsiao J."/>
            <person name="de Vazeille A.R."/>
            <person name="Salzberg S.L."/>
            <person name="White O."/>
            <person name="Fraser C.M."/>
            <person name="Yu Y."/>
            <person name="Kim H."/>
            <person name="Rambo T."/>
            <person name="Currie J."/>
            <person name="Collura K."/>
            <person name="Kernodle-Thompson S."/>
            <person name="Wei F."/>
            <person name="Kudrna K."/>
            <person name="Ammiraju J.S.S."/>
            <person name="Luo M."/>
            <person name="Goicoechea J.L."/>
            <person name="Wing R.A."/>
            <person name="Henry D."/>
            <person name="Oates R."/>
            <person name="Palmer M."/>
            <person name="Pries G."/>
            <person name="Saski C."/>
            <person name="Simmons J."/>
            <person name="Soderlund C."/>
            <person name="Nelson W."/>
            <person name="de la Bastide M."/>
            <person name="Spiegel L."/>
            <person name="Nascimento L."/>
            <person name="Huang E."/>
            <person name="Preston R."/>
            <person name="Zutavern T."/>
            <person name="Palmer L."/>
            <person name="O'Shaughnessy A."/>
            <person name="Dike S."/>
            <person name="McCombie W.R."/>
            <person name="Minx P."/>
            <person name="Cordum H."/>
            <person name="Wilson R."/>
            <person name="Jin W."/>
            <person name="Lee H.R."/>
            <person name="Jiang J."/>
            <person name="Jackson S."/>
        </authorList>
    </citation>
    <scope>NUCLEOTIDE SEQUENCE [LARGE SCALE GENOMIC DNA]</scope>
    <source>
        <strain>cv. Nipponbare</strain>
    </source>
</reference>
<reference key="3">
    <citation type="journal article" date="2005" name="Nature">
        <title>The map-based sequence of the rice genome.</title>
        <authorList>
            <consortium name="International rice genome sequencing project (IRGSP)"/>
        </authorList>
    </citation>
    <scope>NUCLEOTIDE SEQUENCE [LARGE SCALE GENOMIC DNA]</scope>
    <source>
        <strain>cv. Nipponbare</strain>
    </source>
</reference>
<reference key="4">
    <citation type="journal article" date="2008" name="Nucleic Acids Res.">
        <title>The rice annotation project database (RAP-DB): 2008 update.</title>
        <authorList>
            <consortium name="The rice annotation project (RAP)"/>
        </authorList>
    </citation>
    <scope>GENOME REANNOTATION</scope>
    <source>
        <strain>cv. Nipponbare</strain>
    </source>
</reference>
<reference key="5">
    <citation type="journal article" date="2013" name="Rice">
        <title>Improvement of the Oryza sativa Nipponbare reference genome using next generation sequence and optical map data.</title>
        <authorList>
            <person name="Kawahara Y."/>
            <person name="de la Bastide M."/>
            <person name="Hamilton J.P."/>
            <person name="Kanamori H."/>
            <person name="McCombie W.R."/>
            <person name="Ouyang S."/>
            <person name="Schwartz D.C."/>
            <person name="Tanaka T."/>
            <person name="Wu J."/>
            <person name="Zhou S."/>
            <person name="Childs K.L."/>
            <person name="Davidson R.M."/>
            <person name="Lin H."/>
            <person name="Quesada-Ocampo L."/>
            <person name="Vaillancourt B."/>
            <person name="Sakai H."/>
            <person name="Lee S.S."/>
            <person name="Kim J."/>
            <person name="Numa H."/>
            <person name="Itoh T."/>
            <person name="Buell C.R."/>
            <person name="Matsumoto T."/>
        </authorList>
    </citation>
    <scope>GENOME REANNOTATION</scope>
    <source>
        <strain>cv. Nipponbare</strain>
    </source>
</reference>
<reference key="6">
    <citation type="journal article" date="2005" name="PLoS Biol.">
        <title>The genomes of Oryza sativa: a history of duplications.</title>
        <authorList>
            <person name="Yu J."/>
            <person name="Wang J."/>
            <person name="Lin W."/>
            <person name="Li S."/>
            <person name="Li H."/>
            <person name="Zhou J."/>
            <person name="Ni P."/>
            <person name="Dong W."/>
            <person name="Hu S."/>
            <person name="Zeng C."/>
            <person name="Zhang J."/>
            <person name="Zhang Y."/>
            <person name="Li R."/>
            <person name="Xu Z."/>
            <person name="Li S."/>
            <person name="Li X."/>
            <person name="Zheng H."/>
            <person name="Cong L."/>
            <person name="Lin L."/>
            <person name="Yin J."/>
            <person name="Geng J."/>
            <person name="Li G."/>
            <person name="Shi J."/>
            <person name="Liu J."/>
            <person name="Lv H."/>
            <person name="Li J."/>
            <person name="Wang J."/>
            <person name="Deng Y."/>
            <person name="Ran L."/>
            <person name="Shi X."/>
            <person name="Wang X."/>
            <person name="Wu Q."/>
            <person name="Li C."/>
            <person name="Ren X."/>
            <person name="Wang J."/>
            <person name="Wang X."/>
            <person name="Li D."/>
            <person name="Liu D."/>
            <person name="Zhang X."/>
            <person name="Ji Z."/>
            <person name="Zhao W."/>
            <person name="Sun Y."/>
            <person name="Zhang Z."/>
            <person name="Bao J."/>
            <person name="Han Y."/>
            <person name="Dong L."/>
            <person name="Ji J."/>
            <person name="Chen P."/>
            <person name="Wu S."/>
            <person name="Liu J."/>
            <person name="Xiao Y."/>
            <person name="Bu D."/>
            <person name="Tan J."/>
            <person name="Yang L."/>
            <person name="Ye C."/>
            <person name="Zhang J."/>
            <person name="Xu J."/>
            <person name="Zhou Y."/>
            <person name="Yu Y."/>
            <person name="Zhang B."/>
            <person name="Zhuang S."/>
            <person name="Wei H."/>
            <person name="Liu B."/>
            <person name="Lei M."/>
            <person name="Yu H."/>
            <person name="Li Y."/>
            <person name="Xu H."/>
            <person name="Wei S."/>
            <person name="He X."/>
            <person name="Fang L."/>
            <person name="Zhang Z."/>
            <person name="Zhang Y."/>
            <person name="Huang X."/>
            <person name="Su Z."/>
            <person name="Tong W."/>
            <person name="Li J."/>
            <person name="Tong Z."/>
            <person name="Li S."/>
            <person name="Ye J."/>
            <person name="Wang L."/>
            <person name="Fang L."/>
            <person name="Lei T."/>
            <person name="Chen C.-S."/>
            <person name="Chen H.-C."/>
            <person name="Xu Z."/>
            <person name="Li H."/>
            <person name="Huang H."/>
            <person name="Zhang F."/>
            <person name="Xu H."/>
            <person name="Li N."/>
            <person name="Zhao C."/>
            <person name="Li S."/>
            <person name="Dong L."/>
            <person name="Huang Y."/>
            <person name="Li L."/>
            <person name="Xi Y."/>
            <person name="Qi Q."/>
            <person name="Li W."/>
            <person name="Zhang B."/>
            <person name="Hu W."/>
            <person name="Zhang Y."/>
            <person name="Tian X."/>
            <person name="Jiao Y."/>
            <person name="Liang X."/>
            <person name="Jin J."/>
            <person name="Gao L."/>
            <person name="Zheng W."/>
            <person name="Hao B."/>
            <person name="Liu S.-M."/>
            <person name="Wang W."/>
            <person name="Yuan L."/>
            <person name="Cao M."/>
            <person name="McDermott J."/>
            <person name="Samudrala R."/>
            <person name="Wang J."/>
            <person name="Wong G.K.-S."/>
            <person name="Yang H."/>
        </authorList>
    </citation>
    <scope>NUCLEOTIDE SEQUENCE [LARGE SCALE GENOMIC DNA]</scope>
    <source>
        <strain>cv. Nipponbare</strain>
    </source>
</reference>
<reference key="7">
    <citation type="journal article" date="2003" name="Science">
        <title>Collection, mapping, and annotation of over 28,000 cDNA clones from japonica rice.</title>
        <authorList>
            <consortium name="The rice full-length cDNA consortium"/>
        </authorList>
    </citation>
    <scope>NUCLEOTIDE SEQUENCE [LARGE SCALE MRNA]</scope>
    <source>
        <strain>cv. Nipponbare</strain>
    </source>
</reference>
<name>DAPAT_ORYSJ</name>
<feature type="transit peptide" description="Chloroplast" evidence="2">
    <location>
        <begin position="1"/>
        <end position="39"/>
    </location>
</feature>
<feature type="chain" id="PRO_0000416861" description="Probable LL-diaminopimelate aminotransferase, chloroplastic">
    <location>
        <begin position="40"/>
        <end position="464"/>
    </location>
</feature>
<feature type="binding site" description="in other chain" evidence="1">
    <location>
        <position position="102"/>
    </location>
    <ligand>
        <name>substrate</name>
        <note>ligand shared between dimeric partners</note>
    </ligand>
</feature>
<feature type="binding site" evidence="1">
    <location>
        <position position="132"/>
    </location>
    <ligand>
        <name>pyridoxal 5'-phosphate</name>
        <dbReference type="ChEBI" id="CHEBI:597326"/>
        <note>ligand shared between dimeric partners</note>
    </ligand>
</feature>
<feature type="binding site" evidence="1">
    <location>
        <position position="135"/>
    </location>
    <ligand>
        <name>substrate</name>
        <note>ligand shared between dimeric partners</note>
    </ligand>
</feature>
<feature type="binding site" description="in other chain" evidence="1">
    <location>
        <position position="167"/>
    </location>
    <ligand>
        <name>substrate</name>
        <note>ligand shared between dimeric partners</note>
    </ligand>
</feature>
<feature type="binding site" description="in other chain" evidence="1">
    <location>
        <position position="190"/>
    </location>
    <ligand>
        <name>substrate</name>
        <note>ligand shared between dimeric partners</note>
    </ligand>
</feature>
<feature type="binding site" description="in other chain" evidence="1">
    <location>
        <position position="247"/>
    </location>
    <ligand>
        <name>pyridoxal 5'-phosphate</name>
        <dbReference type="ChEBI" id="CHEBI:597326"/>
        <note>ligand shared between dimeric partners</note>
    </ligand>
</feature>
<feature type="binding site" description="in other chain" evidence="1">
    <location>
        <position position="247"/>
    </location>
    <ligand>
        <name>substrate</name>
        <note>ligand shared between dimeric partners</note>
    </ligand>
</feature>
<feature type="binding site" description="in other chain" evidence="1">
    <location>
        <position position="275"/>
    </location>
    <ligand>
        <name>pyridoxal 5'-phosphate</name>
        <dbReference type="ChEBI" id="CHEBI:597326"/>
        <note>ligand shared between dimeric partners</note>
    </ligand>
</feature>
<feature type="binding site" description="in other chain" evidence="1">
    <location>
        <position position="278"/>
    </location>
    <ligand>
        <name>pyridoxal 5'-phosphate</name>
        <dbReference type="ChEBI" id="CHEBI:597326"/>
        <note>ligand shared between dimeric partners</note>
    </ligand>
</feature>
<feature type="binding site" description="in other chain" evidence="1">
    <location>
        <position position="305"/>
    </location>
    <ligand>
        <name>pyridoxal 5'-phosphate</name>
        <dbReference type="ChEBI" id="CHEBI:597326"/>
        <note>ligand shared between dimeric partners</note>
    </ligand>
</feature>
<feature type="binding site" description="in other chain" evidence="1">
    <location>
        <position position="307"/>
    </location>
    <ligand>
        <name>pyridoxal 5'-phosphate</name>
        <dbReference type="ChEBI" id="CHEBI:597326"/>
        <note>ligand shared between dimeric partners</note>
    </ligand>
</feature>
<feature type="binding site" description="in other chain" evidence="1">
    <location>
        <position position="316"/>
    </location>
    <ligand>
        <name>pyridoxal 5'-phosphate</name>
        <dbReference type="ChEBI" id="CHEBI:597326"/>
        <note>ligand shared between dimeric partners</note>
    </ligand>
</feature>
<feature type="binding site" evidence="1">
    <location>
        <position position="347"/>
    </location>
    <ligand>
        <name>substrate</name>
        <note>ligand shared between dimeric partners</note>
    </ligand>
</feature>
<feature type="binding site" description="in other chain" evidence="1">
    <location>
        <position position="442"/>
    </location>
    <ligand>
        <name>substrate</name>
        <note>ligand shared between dimeric partners</note>
    </ligand>
</feature>
<feature type="modified residue" description="N6-(pyridoxal phosphate)lysine" evidence="1">
    <location>
        <position position="308"/>
    </location>
</feature>
<feature type="sequence conflict" description="In Ref. 1; AAR01225." evidence="3" ref="1">
    <original>G</original>
    <variation>A</variation>
    <location>
        <position position="8"/>
    </location>
</feature>
<feature type="sequence conflict" description="In Ref. 1; AAR01225." evidence="3" ref="1">
    <original>K</original>
    <variation>E</variation>
    <location>
        <position position="118"/>
    </location>
</feature>
<comment type="function">
    <text evidence="1">Required for lysine biosynthesis. Catalyzes the direct conversion of tetrahydrodipicolinate to LL-diaminopimelate, a reaction that requires three enzymes in E.coli (By similarity).</text>
</comment>
<comment type="catalytic activity">
    <reaction>
        <text>(2S,6S)-2,6-diaminopimelate + 2-oxoglutarate = (S)-2,3,4,5-tetrahydrodipicolinate + L-glutamate + H2O + H(+)</text>
        <dbReference type="Rhea" id="RHEA:23988"/>
        <dbReference type="ChEBI" id="CHEBI:15377"/>
        <dbReference type="ChEBI" id="CHEBI:15378"/>
        <dbReference type="ChEBI" id="CHEBI:16810"/>
        <dbReference type="ChEBI" id="CHEBI:16845"/>
        <dbReference type="ChEBI" id="CHEBI:29985"/>
        <dbReference type="ChEBI" id="CHEBI:57609"/>
        <dbReference type="EC" id="2.6.1.83"/>
    </reaction>
</comment>
<comment type="cofactor">
    <cofactor evidence="1">
        <name>pyridoxal 5'-phosphate</name>
        <dbReference type="ChEBI" id="CHEBI:597326"/>
    </cofactor>
</comment>
<comment type="pathway">
    <text>Amino-acid biosynthesis; L-lysine biosynthesis via DAP pathway; LL-2,6-diaminopimelate from (S)-tetrahydrodipicolinate (aminotransferase route): step 1/1.</text>
</comment>
<comment type="subunit">
    <text evidence="1">Homodimer.</text>
</comment>
<comment type="subcellular location">
    <subcellularLocation>
        <location evidence="1">Plastid</location>
        <location evidence="1">Chloroplast</location>
    </subcellularLocation>
</comment>
<comment type="similarity">
    <text evidence="3">Belongs to the class-I pyridoxal-phosphate-dependent aminotransferase family. LL-diaminopimelate aminotransferase subfamily.</text>
</comment>
<comment type="sequence caution" evidence="3">
    <conflict type="erroneous gene model prediction">
        <sequence resource="EMBL-CDS" id="ABF95474"/>
    </conflict>
</comment>
<dbReference type="EC" id="2.6.1.83"/>
<dbReference type="EMBL" id="AY338235">
    <property type="protein sequence ID" value="AAR01225.1"/>
    <property type="molecule type" value="mRNA"/>
</dbReference>
<dbReference type="EMBL" id="DP000009">
    <property type="protein sequence ID" value="ABF95473.1"/>
    <property type="molecule type" value="Genomic_DNA"/>
</dbReference>
<dbReference type="EMBL" id="DP000009">
    <property type="protein sequence ID" value="ABF95474.1"/>
    <property type="status" value="ALT_SEQ"/>
    <property type="molecule type" value="Genomic_DNA"/>
</dbReference>
<dbReference type="EMBL" id="AP008209">
    <property type="protein sequence ID" value="BAF11766.1"/>
    <property type="molecule type" value="Genomic_DNA"/>
</dbReference>
<dbReference type="EMBL" id="AP014959">
    <property type="protein sequence ID" value="BAS83755.1"/>
    <property type="molecule type" value="Genomic_DNA"/>
</dbReference>
<dbReference type="EMBL" id="CM000145">
    <property type="protein sequence ID" value="EEE68826.1"/>
    <property type="molecule type" value="Genomic_DNA"/>
</dbReference>
<dbReference type="EMBL" id="AK069075">
    <property type="protein sequence ID" value="BAG91242.1"/>
    <property type="molecule type" value="mRNA"/>
</dbReference>
<dbReference type="RefSeq" id="XP_015631441.1">
    <property type="nucleotide sequence ID" value="XM_015775955.1"/>
</dbReference>
<dbReference type="SMR" id="Q10MQ2"/>
<dbReference type="FunCoup" id="Q10MQ2">
    <property type="interactions" value="843"/>
</dbReference>
<dbReference type="STRING" id="39947.Q10MQ2"/>
<dbReference type="PaxDb" id="39947-Q10MQ2"/>
<dbReference type="EnsemblPlants" id="Os03t0299900-01">
    <property type="protein sequence ID" value="Os03t0299900-01"/>
    <property type="gene ID" value="Os03g0299900"/>
</dbReference>
<dbReference type="Gramene" id="Os03t0299900-01">
    <property type="protein sequence ID" value="Os03t0299900-01"/>
    <property type="gene ID" value="Os03g0299900"/>
</dbReference>
<dbReference type="KEGG" id="dosa:Os03g0299900"/>
<dbReference type="eggNOG" id="KOG0257">
    <property type="taxonomic scope" value="Eukaryota"/>
</dbReference>
<dbReference type="HOGENOM" id="CLU_051433_0_0_1"/>
<dbReference type="InParanoid" id="Q10MQ2"/>
<dbReference type="OMA" id="SKTFNMT"/>
<dbReference type="OrthoDB" id="7042322at2759"/>
<dbReference type="PlantReactome" id="R-OSA-1119419">
    <property type="pathway name" value="Lysine biosynthesis VI"/>
</dbReference>
<dbReference type="UniPathway" id="UPA00034">
    <property type="reaction ID" value="UER00466"/>
</dbReference>
<dbReference type="Proteomes" id="UP000000763">
    <property type="component" value="Chromosome 3"/>
</dbReference>
<dbReference type="Proteomes" id="UP000007752">
    <property type="component" value="Chromosome 8"/>
</dbReference>
<dbReference type="Proteomes" id="UP000059680">
    <property type="component" value="Chromosome 3"/>
</dbReference>
<dbReference type="GO" id="GO:0009507">
    <property type="term" value="C:chloroplast"/>
    <property type="evidence" value="ECO:0007669"/>
    <property type="project" value="UniProtKB-SubCell"/>
</dbReference>
<dbReference type="GO" id="GO:0010285">
    <property type="term" value="F:L,L-diaminopimelate aminotransferase activity"/>
    <property type="evidence" value="ECO:0007669"/>
    <property type="project" value="UniProtKB-EC"/>
</dbReference>
<dbReference type="GO" id="GO:0030170">
    <property type="term" value="F:pyridoxal phosphate binding"/>
    <property type="evidence" value="ECO:0007669"/>
    <property type="project" value="InterPro"/>
</dbReference>
<dbReference type="GO" id="GO:0009089">
    <property type="term" value="P:lysine biosynthetic process via diaminopimelate"/>
    <property type="evidence" value="ECO:0007669"/>
    <property type="project" value="UniProtKB-UniPathway"/>
</dbReference>
<dbReference type="CDD" id="cd00609">
    <property type="entry name" value="AAT_like"/>
    <property type="match status" value="1"/>
</dbReference>
<dbReference type="FunFam" id="3.40.640.10:FF:000099">
    <property type="entry name" value="LL-diaminopimelate aminotransferase, chloroplastic"/>
    <property type="match status" value="1"/>
</dbReference>
<dbReference type="Gene3D" id="3.90.1150.10">
    <property type="entry name" value="Aspartate Aminotransferase, domain 1"/>
    <property type="match status" value="1"/>
</dbReference>
<dbReference type="Gene3D" id="3.40.640.10">
    <property type="entry name" value="Type I PLP-dependent aspartate aminotransferase-like (Major domain)"/>
    <property type="match status" value="1"/>
</dbReference>
<dbReference type="HAMAP" id="MF_01642">
    <property type="entry name" value="DapL_aminotrans_1"/>
    <property type="match status" value="1"/>
</dbReference>
<dbReference type="InterPro" id="IPR004839">
    <property type="entry name" value="Aminotransferase_I/II_large"/>
</dbReference>
<dbReference type="InterPro" id="IPR019942">
    <property type="entry name" value="DapL/ALD1"/>
</dbReference>
<dbReference type="InterPro" id="IPR015424">
    <property type="entry name" value="PyrdxlP-dep_Trfase"/>
</dbReference>
<dbReference type="InterPro" id="IPR015421">
    <property type="entry name" value="PyrdxlP-dep_Trfase_major"/>
</dbReference>
<dbReference type="InterPro" id="IPR015422">
    <property type="entry name" value="PyrdxlP-dep_Trfase_small"/>
</dbReference>
<dbReference type="NCBIfam" id="TIGR03542">
    <property type="entry name" value="DAPAT_plant"/>
    <property type="match status" value="1"/>
</dbReference>
<dbReference type="PANTHER" id="PTHR43144">
    <property type="entry name" value="AMINOTRANSFERASE"/>
    <property type="match status" value="1"/>
</dbReference>
<dbReference type="Pfam" id="PF00155">
    <property type="entry name" value="Aminotran_1_2"/>
    <property type="match status" value="1"/>
</dbReference>
<dbReference type="SUPFAM" id="SSF53383">
    <property type="entry name" value="PLP-dependent transferases"/>
    <property type="match status" value="1"/>
</dbReference>
<evidence type="ECO:0000250" key="1"/>
<evidence type="ECO:0000255" key="2"/>
<evidence type="ECO:0000305" key="3"/>
<organism>
    <name type="scientific">Oryza sativa subsp. japonica</name>
    <name type="common">Rice</name>
    <dbReference type="NCBI Taxonomy" id="39947"/>
    <lineage>
        <taxon>Eukaryota</taxon>
        <taxon>Viridiplantae</taxon>
        <taxon>Streptophyta</taxon>
        <taxon>Embryophyta</taxon>
        <taxon>Tracheophyta</taxon>
        <taxon>Spermatophyta</taxon>
        <taxon>Magnoliopsida</taxon>
        <taxon>Liliopsida</taxon>
        <taxon>Poales</taxon>
        <taxon>Poaceae</taxon>
        <taxon>BOP clade</taxon>
        <taxon>Oryzoideae</taxon>
        <taxon>Oryzeae</taxon>
        <taxon>Oryzinae</taxon>
        <taxon>Oryza</taxon>
        <taxon>Oryza sativa</taxon>
    </lineage>
</organism>
<keyword id="KW-0032">Aminotransferase</keyword>
<keyword id="KW-0150">Chloroplast</keyword>
<keyword id="KW-0934">Plastid</keyword>
<keyword id="KW-0663">Pyridoxal phosphate</keyword>
<keyword id="KW-1185">Reference proteome</keyword>
<keyword id="KW-0808">Transferase</keyword>
<keyword id="KW-0809">Transit peptide</keyword>
<sequence length="464" mass="49858">MAASPAAGAAAATVSSFVSPSSFSSVKASKPDRLRPARRAAAVNVRCVSSPPATETSFKTKVPRNANMAKLQAGYLFPEIARRRAAHLLKFPDAKIISLGIGDTTEPIPDVITNAMAKRAHALSTVDGYSGYGAEQGEKKLRAAIAATYYADLGIEETDIFVSDGAKCDISRLQVLFGSNVKIAVQDPSYPAYVDSSVIMGQTGLYQEDVQKYGNIEYMKCSPENGFFPDLSSVPRTDIIFFCSPNNPTGAAASRDQLTKLVKFAKDNGSIIVYDSAYAMYISDDSPKSIFEIPGAKEVAIETASFSKYAGFTGVRLGWTVVPKELLFSDGHPVAKDFNRIVCTCFNGASNISQAGGLGCLSPEGLKAMSDVVGFYKENTKIIVDTFTSLGFNVYGAKNAPYVWVHFPGRNSWDVFAEILEKAHVVTTPGSGFGPGGEGFVRVSAFGHRENIIEAARRLKQLYK</sequence>